<reference key="1">
    <citation type="submission" date="2000-12" db="EMBL/GenBank/DDBJ databases">
        <title>Isolation of full-length cDNA clones from macaque brain cDNA libraries.</title>
        <authorList>
            <person name="Osada N."/>
            <person name="Hida M."/>
            <person name="Kusuda J."/>
            <person name="Tanuma R."/>
            <person name="Iseki K."/>
            <person name="Hirai M."/>
            <person name="Terao K."/>
            <person name="Suzuki Y."/>
            <person name="Sugano S."/>
            <person name="Hashimoto K."/>
        </authorList>
    </citation>
    <scope>NUCLEOTIDE SEQUENCE [LARGE SCALE MRNA]</scope>
    <source>
        <tissue>Brain cortex</tissue>
    </source>
</reference>
<evidence type="ECO:0000250" key="1"/>
<evidence type="ECO:0000250" key="2">
    <source>
        <dbReference type="UniProtKB" id="Q1M168"/>
    </source>
</evidence>
<evidence type="ECO:0000250" key="3">
    <source>
        <dbReference type="UniProtKB" id="Q86WG3"/>
    </source>
</evidence>
<evidence type="ECO:0000250" key="4">
    <source>
        <dbReference type="UniProtKB" id="Q8BHE3"/>
    </source>
</evidence>
<evidence type="ECO:0000255" key="5">
    <source>
        <dbReference type="PROSITE-ProRule" id="PRU00056"/>
    </source>
</evidence>
<evidence type="ECO:0000256" key="6">
    <source>
        <dbReference type="SAM" id="MobiDB-lite"/>
    </source>
</evidence>
<organism>
    <name type="scientific">Macaca fascicularis</name>
    <name type="common">Crab-eating macaque</name>
    <name type="synonym">Cynomolgus monkey</name>
    <dbReference type="NCBI Taxonomy" id="9541"/>
    <lineage>
        <taxon>Eukaryota</taxon>
        <taxon>Metazoa</taxon>
        <taxon>Chordata</taxon>
        <taxon>Craniata</taxon>
        <taxon>Vertebrata</taxon>
        <taxon>Euteleostomi</taxon>
        <taxon>Mammalia</taxon>
        <taxon>Eutheria</taxon>
        <taxon>Euarchontoglires</taxon>
        <taxon>Primates</taxon>
        <taxon>Haplorrhini</taxon>
        <taxon>Catarrhini</taxon>
        <taxon>Cercopithecidae</taxon>
        <taxon>Cercopithecinae</taxon>
        <taxon>Macaca</taxon>
    </lineage>
</organism>
<feature type="chain" id="PRO_0000210768" description="Caytaxin">
    <location>
        <begin position="1"/>
        <end position="371"/>
    </location>
</feature>
<feature type="domain" description="CRAL-TRIO" evidence="5">
    <location>
        <begin position="171"/>
        <end position="328"/>
    </location>
</feature>
<feature type="region of interest" description="Disordered" evidence="6">
    <location>
        <begin position="1"/>
        <end position="54"/>
    </location>
</feature>
<feature type="region of interest" description="Required for interaction with KLC1" evidence="1">
    <location>
        <begin position="115"/>
        <end position="120"/>
    </location>
</feature>
<feature type="region of interest" description="Mediates interaction with GLS" evidence="1">
    <location>
        <begin position="190"/>
        <end position="371"/>
    </location>
</feature>
<feature type="region of interest" description="Disordered" evidence="6">
    <location>
        <begin position="331"/>
        <end position="371"/>
    </location>
</feature>
<feature type="compositionally biased region" description="Basic and acidic residues" evidence="6">
    <location>
        <begin position="11"/>
        <end position="29"/>
    </location>
</feature>
<feature type="compositionally biased region" description="Polar residues" evidence="6">
    <location>
        <begin position="42"/>
        <end position="53"/>
    </location>
</feature>
<feature type="site" description="Cleavage; by CASP3" evidence="1">
    <location>
        <begin position="105"/>
        <end position="106"/>
    </location>
</feature>
<comment type="function">
    <text evidence="1">Functions in the development of neural tissues, particularly the postnatal maturation of the cerebellar cortex. May play a role in neurotransmission through regulation of glutaminase/GLS, an enzyme responsible for the production in neurons of the glutamate neurotransmitter. Alternatively, may regulate the localization of mitochondria within axons and dendrites (By similarity).</text>
</comment>
<comment type="subunit">
    <text evidence="1">Interacts with KLC1; may link mitochondria to KLC1 and regulate mitochondria localization into neuron projections. Interacts with GLS; the interaction is direct and may control GLS localization, negatively regulating its activity. Interacts with PIN1 (via WW domain); upon NGF stimulation. The interaction with PIN1 and GLS is competitive.</text>
</comment>
<comment type="subcellular location">
    <subcellularLocation>
        <location evidence="2">Cell projection</location>
        <location evidence="2">Axon</location>
    </subcellularLocation>
    <subcellularLocation>
        <location evidence="2">Cell projection</location>
        <location evidence="2">Dendrite</location>
    </subcellularLocation>
    <subcellularLocation>
        <location evidence="4">Presynapse</location>
    </subcellularLocation>
    <subcellularLocation>
        <location evidence="2">Mitochondrion</location>
    </subcellularLocation>
    <subcellularLocation>
        <location evidence="2">Cell projection</location>
        <location evidence="2">Growth cone</location>
    </subcellularLocation>
    <subcellularLocation>
        <location evidence="3">Cytoplasm</location>
    </subcellularLocation>
</comment>
<comment type="domain">
    <text evidence="1">The CRAL-TRIO domain is known to bind small hydrophobic molecules.</text>
</comment>
<comment type="PTM">
    <text evidence="1">Cleaved by CASP3 and CASP7. The potential C-terminal product released by CASP3 cleavage may inhibit the ERK signaling pathway through MAP2K2 (By similarity).</text>
</comment>
<comment type="PTM">
    <text evidence="1">May be ubiquitinated by STUB1.</text>
</comment>
<keyword id="KW-0966">Cell projection</keyword>
<keyword id="KW-0963">Cytoplasm</keyword>
<keyword id="KW-0496">Mitochondrion</keyword>
<keyword id="KW-0524">Neurogenesis</keyword>
<keyword id="KW-1185">Reference proteome</keyword>
<keyword id="KW-0770">Synapse</keyword>
<keyword id="KW-0813">Transport</keyword>
<keyword id="KW-0832">Ubl conjugation</keyword>
<gene>
    <name type="primary">ATCAY</name>
    <name type="ORF">QccE-20783</name>
</gene>
<accession>Q9GKT0</accession>
<proteinExistence type="evidence at transcript level"/>
<protein>
    <recommendedName>
        <fullName>Caytaxin</fullName>
    </recommendedName>
</protein>
<sequence length="371" mass="42020">MGTTEATLRMENVDVKEEWQDEDLPRPLPEETGVELLGSPVEDTSSPPNTLNFNGAHRKRKTLVAPDINISLDQSEGSLLSDDFLDTPDDLDINVDDIETPDETDSLEFLGNGNELEWGDDTPVATAKNMPGDSADLFGDGTTEDGGAANGRLWRTVIIGEQEHRIDLHMIRPYMKVVTHGGYYGEGLNAIIVFAACFLPDSSLPDYHYIMENLFLYVISSLELLVAEDYMIVYLNGATPRRRMPGIGWLKKCYQMIDRRLRKNLKSLIIVHPSWFIRTVLAISRPFISVKFINKIQYVHSLEDLEQLIPMEHVQIPDCVLQYEEERLKARRESARPQPEFVMPRSEEKPEVAPVENRSAPVTEDQETSMS</sequence>
<name>ATCAY_MACFA</name>
<dbReference type="EMBL" id="AB052149">
    <property type="protein sequence ID" value="BAB19004.1"/>
    <property type="molecule type" value="mRNA"/>
</dbReference>
<dbReference type="RefSeq" id="NP_001306294.1">
    <property type="nucleotide sequence ID" value="NM_001319365.1"/>
</dbReference>
<dbReference type="STRING" id="9541.ENSMFAP00000032905"/>
<dbReference type="eggNOG" id="KOG3308">
    <property type="taxonomic scope" value="Eukaryota"/>
</dbReference>
<dbReference type="Proteomes" id="UP000233100">
    <property type="component" value="Unplaced"/>
</dbReference>
<dbReference type="GO" id="GO:0030424">
    <property type="term" value="C:axon"/>
    <property type="evidence" value="ECO:0000250"/>
    <property type="project" value="UniProtKB"/>
</dbReference>
<dbReference type="GO" id="GO:0005737">
    <property type="term" value="C:cytoplasm"/>
    <property type="evidence" value="ECO:0000250"/>
    <property type="project" value="UniProtKB"/>
</dbReference>
<dbReference type="GO" id="GO:0030425">
    <property type="term" value="C:dendrite"/>
    <property type="evidence" value="ECO:0000250"/>
    <property type="project" value="UniProtKB"/>
</dbReference>
<dbReference type="GO" id="GO:0030426">
    <property type="term" value="C:growth cone"/>
    <property type="evidence" value="ECO:0007669"/>
    <property type="project" value="UniProtKB-SubCell"/>
</dbReference>
<dbReference type="GO" id="GO:0031966">
    <property type="term" value="C:mitochondrial membrane"/>
    <property type="evidence" value="ECO:0000250"/>
    <property type="project" value="UniProtKB"/>
</dbReference>
<dbReference type="GO" id="GO:0043005">
    <property type="term" value="C:neuron projection"/>
    <property type="evidence" value="ECO:0000250"/>
    <property type="project" value="UniProtKB"/>
</dbReference>
<dbReference type="GO" id="GO:0098793">
    <property type="term" value="C:presynapse"/>
    <property type="evidence" value="ECO:0007669"/>
    <property type="project" value="UniProtKB-SubCell"/>
</dbReference>
<dbReference type="GO" id="GO:0045202">
    <property type="term" value="C:synapse"/>
    <property type="evidence" value="ECO:0000250"/>
    <property type="project" value="UniProtKB"/>
</dbReference>
<dbReference type="GO" id="GO:0006915">
    <property type="term" value="P:apoptotic process"/>
    <property type="evidence" value="ECO:0007669"/>
    <property type="project" value="TreeGrafter"/>
</dbReference>
<dbReference type="GO" id="GO:0048311">
    <property type="term" value="P:mitochondrion distribution"/>
    <property type="evidence" value="ECO:0000250"/>
    <property type="project" value="UniProtKB"/>
</dbReference>
<dbReference type="GO" id="GO:2000212">
    <property type="term" value="P:negative regulation of glutamate metabolic process"/>
    <property type="evidence" value="ECO:0000250"/>
    <property type="project" value="UniProtKB"/>
</dbReference>
<dbReference type="GO" id="GO:0031175">
    <property type="term" value="P:neuron projection development"/>
    <property type="evidence" value="ECO:0000250"/>
    <property type="project" value="UniProtKB"/>
</dbReference>
<dbReference type="GO" id="GO:0035418">
    <property type="term" value="P:protein localization to synapse"/>
    <property type="evidence" value="ECO:0000250"/>
    <property type="project" value="UniProtKB"/>
</dbReference>
<dbReference type="GO" id="GO:0032880">
    <property type="term" value="P:regulation of protein localization"/>
    <property type="evidence" value="ECO:0000250"/>
    <property type="project" value="UniProtKB"/>
</dbReference>
<dbReference type="CDD" id="cd00170">
    <property type="entry name" value="SEC14"/>
    <property type="match status" value="1"/>
</dbReference>
<dbReference type="FunFam" id="3.40.525.10:FF:000001">
    <property type="entry name" value="BCL2/adenovirus E1B protein-interacting protein 2"/>
    <property type="match status" value="1"/>
</dbReference>
<dbReference type="Gene3D" id="3.40.525.10">
    <property type="entry name" value="CRAL-TRIO lipid binding domain"/>
    <property type="match status" value="1"/>
</dbReference>
<dbReference type="InterPro" id="IPR022181">
    <property type="entry name" value="Bcl2-/adenovirus-E1B"/>
</dbReference>
<dbReference type="InterPro" id="IPR001251">
    <property type="entry name" value="CRAL-TRIO_dom"/>
</dbReference>
<dbReference type="InterPro" id="IPR036865">
    <property type="entry name" value="CRAL-TRIO_dom_sf"/>
</dbReference>
<dbReference type="PANTHER" id="PTHR12112">
    <property type="entry name" value="BNIP - RELATED"/>
    <property type="match status" value="1"/>
</dbReference>
<dbReference type="PANTHER" id="PTHR12112:SF9">
    <property type="entry name" value="CAYTAXIN"/>
    <property type="match status" value="1"/>
</dbReference>
<dbReference type="Pfam" id="PF12496">
    <property type="entry name" value="BNIP2"/>
    <property type="match status" value="1"/>
</dbReference>
<dbReference type="Pfam" id="PF13716">
    <property type="entry name" value="CRAL_TRIO_2"/>
    <property type="match status" value="1"/>
</dbReference>
<dbReference type="SMART" id="SM00516">
    <property type="entry name" value="SEC14"/>
    <property type="match status" value="1"/>
</dbReference>
<dbReference type="SUPFAM" id="SSF52087">
    <property type="entry name" value="CRAL/TRIO domain"/>
    <property type="match status" value="1"/>
</dbReference>
<dbReference type="PROSITE" id="PS50191">
    <property type="entry name" value="CRAL_TRIO"/>
    <property type="match status" value="1"/>
</dbReference>